<protein>
    <recommendedName>
        <fullName evidence="1">Capsid vertex component 2</fullName>
    </recommendedName>
</protein>
<evidence type="ECO:0000255" key="1">
    <source>
        <dbReference type="HAMAP-Rule" id="MF_04025"/>
    </source>
</evidence>
<evidence type="ECO:0000256" key="2">
    <source>
        <dbReference type="SAM" id="MobiDB-lite"/>
    </source>
</evidence>
<evidence type="ECO:0000305" key="3"/>
<evidence type="ECO:0000312" key="4">
    <source>
        <dbReference type="EMBL" id="AAS45921.1"/>
    </source>
</evidence>
<proteinExistence type="inferred from homology"/>
<keyword id="KW-0167">Capsid protein</keyword>
<keyword id="KW-1048">Host nucleus</keyword>
<keyword id="KW-0945">Host-virus interaction</keyword>
<keyword id="KW-0231">Viral genome packaging</keyword>
<keyword id="KW-1163">Viral penetration into host nucleus</keyword>
<keyword id="KW-1188">Viral release from host cell</keyword>
<keyword id="KW-0946">Virion</keyword>
<keyword id="KW-1160">Virus entry into host cell</keyword>
<feature type="chain" id="PRO_0000115996" description="Capsid vertex component 2">
    <location>
        <begin position="1"/>
        <end position="587"/>
    </location>
</feature>
<feature type="region of interest" description="Interaction with major capsid protein/MCP" evidence="1">
    <location>
        <begin position="1"/>
        <end position="53"/>
    </location>
</feature>
<feature type="region of interest" description="Disordered" evidence="2">
    <location>
        <begin position="113"/>
        <end position="132"/>
    </location>
</feature>
<sequence length="587" mass="63761">MAEYVNYVLGSLYVSDTATSTIPTDVRNFIAPPFPLNFWSGPTFTVRSNTRADPLKLVAARHRAAAAAIDTLEAQSQYGVANVDALIRPLERQVAKVADALAALEDAARAAESADAATPQVNASEADQRPDNIGQSLSEIQIAKNDVPMEFDTNLAVDLLATVFVSRAAGGSNGVVFGTWYRALQDRLVTERPVATRSIDYRDGRMSKTFMTTAVVSLQSCGRLYIGNRPYSAFEAAVLCLHLAHRAVNSNYTYPTSFSGLIEQLPVYIEAFSTALGDGTLGKVGYEFNGARLPKNQFHVPGGGGRYERGALNGHGVLETLIRLKVLPAIPGSLGTTSTAVGPELDADQTAYIDDVNKAAAAFLVRAQNLFLTEDQTLLRSTINTITALLLLRRLLWNGNVYTDRLRNNFQLGAIVPNLAVSQRDARGASGGDAAAMVSRSGNNNFTFLCERYVSPIYIANREVELTQLFPGLAALCLDAQTVARDQPQHRAVNVSTGRNQTNLTRLIGIELENRRRTAPVPINEVLAAHDAVALQYERGLGLLMQKPRLRASLEETRRLGQFNVASDYDLLYFVCLGYIPSLTSAM</sequence>
<gene>
    <name evidence="1" type="primary">CVC2</name>
    <name type="ordered locus">36</name>
</gene>
<comment type="function">
    <text evidence="1">Capsid vertex-specific component that plays a role during viral DNA encapsidation, assuring correct genome cleavage and presumably stabilizing capsids that contain full-length viral genomes. Participates in the interaction between the capsid and the tegument through interaction with the large tegument protein/LTP.</text>
</comment>
<comment type="subunit">
    <text evidence="1">Heterodimerizes with CVC1. Interacts with major capsid protein/MCP and triplex capsid protein 1/TRX1 at the pentamer vertices. Interacts with the large tegument protein/LTP.</text>
</comment>
<comment type="subcellular location">
    <subcellularLocation>
        <location evidence="1">Virion</location>
    </subcellularLocation>
    <subcellularLocation>
        <location evidence="1">Host nucleus</location>
    </subcellularLocation>
</comment>
<comment type="similarity">
    <text evidence="1">Belongs to the herpesviridae CVC2 protein family.</text>
</comment>
<organism>
    <name type="scientific">Equine herpesvirus 1 (strain V592)</name>
    <name type="common">EHV-1</name>
    <name type="synonym">Equine abortion virus</name>
    <dbReference type="NCBI Taxonomy" id="310273"/>
    <lineage>
        <taxon>Viruses</taxon>
        <taxon>Duplodnaviria</taxon>
        <taxon>Heunggongvirae</taxon>
        <taxon>Peploviricota</taxon>
        <taxon>Herviviricetes</taxon>
        <taxon>Herpesvirales</taxon>
        <taxon>Orthoherpesviridae</taxon>
        <taxon>Alphaherpesvirinae</taxon>
        <taxon>Varicellovirus</taxon>
        <taxon>Varicellovirus equidalpha1</taxon>
        <taxon>Equid alphaherpesvirus 1</taxon>
    </lineage>
</organism>
<dbReference type="EMBL" id="AY464052">
    <property type="protein sequence ID" value="AAS45921.1"/>
    <property type="molecule type" value="Genomic_DNA"/>
</dbReference>
<dbReference type="SMR" id="Q6S6T5"/>
<dbReference type="Proteomes" id="UP000008296">
    <property type="component" value="Segment"/>
</dbReference>
<dbReference type="GO" id="GO:0043657">
    <property type="term" value="C:host cell"/>
    <property type="evidence" value="ECO:0007669"/>
    <property type="project" value="GOC"/>
</dbReference>
<dbReference type="GO" id="GO:0042025">
    <property type="term" value="C:host cell nucleus"/>
    <property type="evidence" value="ECO:0007669"/>
    <property type="project" value="UniProtKB-SubCell"/>
</dbReference>
<dbReference type="GO" id="GO:0019028">
    <property type="term" value="C:viral capsid"/>
    <property type="evidence" value="ECO:0007669"/>
    <property type="project" value="UniProtKB-KW"/>
</dbReference>
<dbReference type="GO" id="GO:0046718">
    <property type="term" value="P:symbiont entry into host cell"/>
    <property type="evidence" value="ECO:0007669"/>
    <property type="project" value="UniProtKB-KW"/>
</dbReference>
<dbReference type="GO" id="GO:0019072">
    <property type="term" value="P:viral genome packaging"/>
    <property type="evidence" value="ECO:0007669"/>
    <property type="project" value="InterPro"/>
</dbReference>
<dbReference type="GO" id="GO:0075732">
    <property type="term" value="P:viral penetration into host nucleus"/>
    <property type="evidence" value="ECO:0007669"/>
    <property type="project" value="UniProtKB-KW"/>
</dbReference>
<dbReference type="HAMAP" id="MF_04025">
    <property type="entry name" value="HSV_CVC2"/>
    <property type="match status" value="1"/>
</dbReference>
<dbReference type="InterPro" id="IPR002493">
    <property type="entry name" value="Herpes_UL25"/>
</dbReference>
<dbReference type="Pfam" id="PF01499">
    <property type="entry name" value="Herpes_UL25"/>
    <property type="match status" value="1"/>
</dbReference>
<accession>Q6S6T5</accession>
<organismHost>
    <name type="scientific">Equus caballus</name>
    <name type="common">Horse</name>
    <dbReference type="NCBI Taxonomy" id="9796"/>
</organismHost>
<reference evidence="3 4" key="1">
    <citation type="submission" date="2003-11" db="EMBL/GenBank/DDBJ databases">
        <authorList>
            <person name="Davis-Poynter N."/>
            <person name="Nugent J."/>
            <person name="Birch-Machin I."/>
            <person name="Allen G.P."/>
        </authorList>
    </citation>
    <scope>NUCLEOTIDE SEQUENCE [LARGE SCALE GENOMIC DNA]</scope>
</reference>
<name>CVC2_EHV1V</name>